<feature type="chain" id="PRO_1000084560" description="tRNA pseudouridine synthase B">
    <location>
        <begin position="1"/>
        <end position="302"/>
    </location>
</feature>
<feature type="active site" description="Nucleophile" evidence="1">
    <location>
        <position position="43"/>
    </location>
</feature>
<protein>
    <recommendedName>
        <fullName evidence="1">tRNA pseudouridine synthase B</fullName>
        <ecNumber evidence="1">5.4.99.25</ecNumber>
    </recommendedName>
    <alternativeName>
        <fullName evidence="1">tRNA pseudouridine(55) synthase</fullName>
        <shortName evidence="1">Psi55 synthase</shortName>
    </alternativeName>
    <alternativeName>
        <fullName evidence="1">tRNA pseudouridylate synthase</fullName>
    </alternativeName>
    <alternativeName>
        <fullName evidence="1">tRNA-uridine isomerase</fullName>
    </alternativeName>
</protein>
<comment type="function">
    <text evidence="1">Responsible for synthesis of pseudouridine from uracil-55 in the psi GC loop of transfer RNAs.</text>
</comment>
<comment type="catalytic activity">
    <reaction evidence="1">
        <text>uridine(55) in tRNA = pseudouridine(55) in tRNA</text>
        <dbReference type="Rhea" id="RHEA:42532"/>
        <dbReference type="Rhea" id="RHEA-COMP:10101"/>
        <dbReference type="Rhea" id="RHEA-COMP:10102"/>
        <dbReference type="ChEBI" id="CHEBI:65314"/>
        <dbReference type="ChEBI" id="CHEBI:65315"/>
        <dbReference type="EC" id="5.4.99.25"/>
    </reaction>
</comment>
<comment type="similarity">
    <text evidence="1">Belongs to the pseudouridine synthase TruB family. Type 1 subfamily.</text>
</comment>
<gene>
    <name evidence="1" type="primary">truB</name>
    <name type="ordered locus">BURPS668_1742</name>
</gene>
<dbReference type="EC" id="5.4.99.25" evidence="1"/>
<dbReference type="EMBL" id="CP000570">
    <property type="protein sequence ID" value="ABN81467.1"/>
    <property type="molecule type" value="Genomic_DNA"/>
</dbReference>
<dbReference type="RefSeq" id="WP_011851533.1">
    <property type="nucleotide sequence ID" value="NC_009074.1"/>
</dbReference>
<dbReference type="SMR" id="A3N8W0"/>
<dbReference type="KEGG" id="bpd:BURPS668_1742"/>
<dbReference type="HOGENOM" id="CLU_032087_0_3_4"/>
<dbReference type="GO" id="GO:0003723">
    <property type="term" value="F:RNA binding"/>
    <property type="evidence" value="ECO:0007669"/>
    <property type="project" value="InterPro"/>
</dbReference>
<dbReference type="GO" id="GO:0160148">
    <property type="term" value="F:tRNA pseudouridine(55) synthase activity"/>
    <property type="evidence" value="ECO:0007669"/>
    <property type="project" value="UniProtKB-EC"/>
</dbReference>
<dbReference type="GO" id="GO:1990481">
    <property type="term" value="P:mRNA pseudouridine synthesis"/>
    <property type="evidence" value="ECO:0007669"/>
    <property type="project" value="TreeGrafter"/>
</dbReference>
<dbReference type="GO" id="GO:0031119">
    <property type="term" value="P:tRNA pseudouridine synthesis"/>
    <property type="evidence" value="ECO:0007669"/>
    <property type="project" value="UniProtKB-UniRule"/>
</dbReference>
<dbReference type="CDD" id="cd02573">
    <property type="entry name" value="PseudoU_synth_EcTruB"/>
    <property type="match status" value="1"/>
</dbReference>
<dbReference type="CDD" id="cd21152">
    <property type="entry name" value="PUA_TruB_bacterial"/>
    <property type="match status" value="1"/>
</dbReference>
<dbReference type="FunFam" id="3.30.2350.10:FF:000011">
    <property type="entry name" value="tRNA pseudouridine synthase B"/>
    <property type="match status" value="1"/>
</dbReference>
<dbReference type="Gene3D" id="3.30.2350.10">
    <property type="entry name" value="Pseudouridine synthase"/>
    <property type="match status" value="1"/>
</dbReference>
<dbReference type="Gene3D" id="2.30.130.10">
    <property type="entry name" value="PUA domain"/>
    <property type="match status" value="1"/>
</dbReference>
<dbReference type="HAMAP" id="MF_01080">
    <property type="entry name" value="TruB_bact"/>
    <property type="match status" value="1"/>
</dbReference>
<dbReference type="InterPro" id="IPR020103">
    <property type="entry name" value="PsdUridine_synth_cat_dom_sf"/>
</dbReference>
<dbReference type="InterPro" id="IPR002501">
    <property type="entry name" value="PsdUridine_synth_N"/>
</dbReference>
<dbReference type="InterPro" id="IPR015947">
    <property type="entry name" value="PUA-like_sf"/>
</dbReference>
<dbReference type="InterPro" id="IPR036974">
    <property type="entry name" value="PUA_sf"/>
</dbReference>
<dbReference type="InterPro" id="IPR014780">
    <property type="entry name" value="tRNA_psdUridine_synth_TruB"/>
</dbReference>
<dbReference type="InterPro" id="IPR015240">
    <property type="entry name" value="tRNA_sdUridine_synth_fam1_C"/>
</dbReference>
<dbReference type="InterPro" id="IPR032819">
    <property type="entry name" value="TruB_C"/>
</dbReference>
<dbReference type="NCBIfam" id="TIGR00431">
    <property type="entry name" value="TruB"/>
    <property type="match status" value="1"/>
</dbReference>
<dbReference type="PANTHER" id="PTHR13767:SF2">
    <property type="entry name" value="PSEUDOURIDYLATE SYNTHASE TRUB1"/>
    <property type="match status" value="1"/>
</dbReference>
<dbReference type="PANTHER" id="PTHR13767">
    <property type="entry name" value="TRNA-PSEUDOURIDINE SYNTHASE"/>
    <property type="match status" value="1"/>
</dbReference>
<dbReference type="Pfam" id="PF09157">
    <property type="entry name" value="TruB-C_2"/>
    <property type="match status" value="1"/>
</dbReference>
<dbReference type="Pfam" id="PF16198">
    <property type="entry name" value="TruB_C_2"/>
    <property type="match status" value="1"/>
</dbReference>
<dbReference type="Pfam" id="PF01509">
    <property type="entry name" value="TruB_N"/>
    <property type="match status" value="1"/>
</dbReference>
<dbReference type="SUPFAM" id="SSF55120">
    <property type="entry name" value="Pseudouridine synthase"/>
    <property type="match status" value="1"/>
</dbReference>
<dbReference type="SUPFAM" id="SSF88697">
    <property type="entry name" value="PUA domain-like"/>
    <property type="match status" value="1"/>
</dbReference>
<sequence length="302" mass="32305">MARRALDGVLLLDKPVGLSSNDALMRAKRLYQVKKAGHTGTLDPLASGLLPLCFGEATKFSQDLLEADKTYEATMRLGVRTTTGDAEGDVLDTRDVSCDEAAVRAALARFVGEIVQVPPMYSALKRDGKPLYEYARAGQTVEREGRTVTIRALALVSCALPDVTFRVTCSKGTYVRTLAEDIGEALGCGAHLTMLRRTGVGPLTLEHAVTLDALDAATQDERDARLAPVDALLSTFPCVKLDAALATRFLHGQRLKLSELAARPDAAEGGRVRVYDADDRLLGVARASEGVLAPERLVVTGA</sequence>
<reference key="1">
    <citation type="journal article" date="2010" name="Genome Biol. Evol.">
        <title>Continuing evolution of Burkholderia mallei through genome reduction and large-scale rearrangements.</title>
        <authorList>
            <person name="Losada L."/>
            <person name="Ronning C.M."/>
            <person name="DeShazer D."/>
            <person name="Woods D."/>
            <person name="Fedorova N."/>
            <person name="Kim H.S."/>
            <person name="Shabalina S.A."/>
            <person name="Pearson T.R."/>
            <person name="Brinkac L."/>
            <person name="Tan P."/>
            <person name="Nandi T."/>
            <person name="Crabtree J."/>
            <person name="Badger J."/>
            <person name="Beckstrom-Sternberg S."/>
            <person name="Saqib M."/>
            <person name="Schutzer S.E."/>
            <person name="Keim P."/>
            <person name="Nierman W.C."/>
        </authorList>
    </citation>
    <scope>NUCLEOTIDE SEQUENCE [LARGE SCALE GENOMIC DNA]</scope>
    <source>
        <strain>668</strain>
    </source>
</reference>
<keyword id="KW-0413">Isomerase</keyword>
<keyword id="KW-0819">tRNA processing</keyword>
<proteinExistence type="inferred from homology"/>
<organism>
    <name type="scientific">Burkholderia pseudomallei (strain 668)</name>
    <dbReference type="NCBI Taxonomy" id="320373"/>
    <lineage>
        <taxon>Bacteria</taxon>
        <taxon>Pseudomonadati</taxon>
        <taxon>Pseudomonadota</taxon>
        <taxon>Betaproteobacteria</taxon>
        <taxon>Burkholderiales</taxon>
        <taxon>Burkholderiaceae</taxon>
        <taxon>Burkholderia</taxon>
        <taxon>pseudomallei group</taxon>
    </lineage>
</organism>
<accession>A3N8W0</accession>
<evidence type="ECO:0000255" key="1">
    <source>
        <dbReference type="HAMAP-Rule" id="MF_01080"/>
    </source>
</evidence>
<name>TRUB_BURP6</name>